<evidence type="ECO:0000255" key="1">
    <source>
        <dbReference type="HAMAP-Rule" id="MF_00494"/>
    </source>
</evidence>
<keyword id="KW-0963">Cytoplasm</keyword>
<keyword id="KW-0570">Pentose shunt</keyword>
<keyword id="KW-0704">Schiff base</keyword>
<keyword id="KW-0808">Transferase</keyword>
<reference key="1">
    <citation type="submission" date="2009-03" db="EMBL/GenBank/DDBJ databases">
        <title>Brucella melitensis ATCC 23457 whole genome shotgun sequencing project.</title>
        <authorList>
            <person name="Setubal J.C."/>
            <person name="Boyle S."/>
            <person name="Crasta O.R."/>
            <person name="Gillespie J.J."/>
            <person name="Kenyon R.W."/>
            <person name="Lu J."/>
            <person name="Mane S."/>
            <person name="Nagrani S."/>
            <person name="Shallom J.M."/>
            <person name="Shallom S."/>
            <person name="Shukla M."/>
            <person name="Snyder E.E."/>
            <person name="Sobral B.W."/>
            <person name="Wattam A.R."/>
            <person name="Will R."/>
            <person name="Williams K."/>
            <person name="Yoo H."/>
            <person name="Munk C."/>
            <person name="Tapia R."/>
            <person name="Han C."/>
            <person name="Detter J.C."/>
            <person name="Bruce D."/>
            <person name="Brettin T.S."/>
        </authorList>
    </citation>
    <scope>NUCLEOTIDE SEQUENCE [LARGE SCALE GENOMIC DNA]</scope>
    <source>
        <strain>ATCC 23457</strain>
    </source>
</reference>
<accession>C0RF56</accession>
<name>TAL_BRUMB</name>
<organism>
    <name type="scientific">Brucella melitensis biotype 2 (strain ATCC 23457)</name>
    <dbReference type="NCBI Taxonomy" id="546272"/>
    <lineage>
        <taxon>Bacteria</taxon>
        <taxon>Pseudomonadati</taxon>
        <taxon>Pseudomonadota</taxon>
        <taxon>Alphaproteobacteria</taxon>
        <taxon>Hyphomicrobiales</taxon>
        <taxon>Brucellaceae</taxon>
        <taxon>Brucella/Ochrobactrum group</taxon>
        <taxon>Brucella</taxon>
    </lineage>
</organism>
<protein>
    <recommendedName>
        <fullName evidence="1">Probable transaldolase</fullName>
        <ecNumber evidence="1">2.2.1.2</ecNumber>
    </recommendedName>
</protein>
<proteinExistence type="inferred from homology"/>
<comment type="function">
    <text evidence="1">Transaldolase is important for the balance of metabolites in the pentose-phosphate pathway.</text>
</comment>
<comment type="catalytic activity">
    <reaction evidence="1">
        <text>D-sedoheptulose 7-phosphate + D-glyceraldehyde 3-phosphate = D-erythrose 4-phosphate + beta-D-fructose 6-phosphate</text>
        <dbReference type="Rhea" id="RHEA:17053"/>
        <dbReference type="ChEBI" id="CHEBI:16897"/>
        <dbReference type="ChEBI" id="CHEBI:57483"/>
        <dbReference type="ChEBI" id="CHEBI:57634"/>
        <dbReference type="ChEBI" id="CHEBI:59776"/>
        <dbReference type="EC" id="2.2.1.2"/>
    </reaction>
</comment>
<comment type="pathway">
    <text evidence="1">Carbohydrate degradation; pentose phosphate pathway; D-glyceraldehyde 3-phosphate and beta-D-fructose 6-phosphate from D-ribose 5-phosphate and D-xylulose 5-phosphate (non-oxidative stage): step 2/3.</text>
</comment>
<comment type="subcellular location">
    <subcellularLocation>
        <location evidence="1">Cytoplasm</location>
    </subcellularLocation>
</comment>
<comment type="similarity">
    <text evidence="1">Belongs to the transaldolase family. Type 3B subfamily.</text>
</comment>
<gene>
    <name evidence="1" type="primary">tal</name>
    <name type="ordered locus">BMEA_A1855</name>
</gene>
<sequence length="217" mass="23359">MKFFVDTADVKEIRELNDLGLVDGVTTNPSLILKSGRDIIEVTKEICNIVKGPVSAEVAATEYEQMMKEAAVIARIADNICIKLPVTLDGLKACKALTSEGHKVNMTLCFSANQALLAAKAGATFISPFIGRLDDTGINGMELIAEIRTIYDNYDFRTEILAASVRTVNHVKEAALIGADVVTAPPATLKALVKHPLTDKGLETFLADWAKTGQKIA</sequence>
<dbReference type="EC" id="2.2.1.2" evidence="1"/>
<dbReference type="EMBL" id="CP001488">
    <property type="protein sequence ID" value="ACO01528.1"/>
    <property type="molecule type" value="Genomic_DNA"/>
</dbReference>
<dbReference type="SMR" id="C0RF56"/>
<dbReference type="KEGG" id="bmi:BMEA_A1855"/>
<dbReference type="HOGENOM" id="CLU_079764_0_0_5"/>
<dbReference type="UniPathway" id="UPA00115">
    <property type="reaction ID" value="UER00414"/>
</dbReference>
<dbReference type="Proteomes" id="UP000001748">
    <property type="component" value="Chromosome I"/>
</dbReference>
<dbReference type="GO" id="GO:0005737">
    <property type="term" value="C:cytoplasm"/>
    <property type="evidence" value="ECO:0007669"/>
    <property type="project" value="UniProtKB-SubCell"/>
</dbReference>
<dbReference type="GO" id="GO:0016832">
    <property type="term" value="F:aldehyde-lyase activity"/>
    <property type="evidence" value="ECO:0007669"/>
    <property type="project" value="InterPro"/>
</dbReference>
<dbReference type="GO" id="GO:0004801">
    <property type="term" value="F:transaldolase activity"/>
    <property type="evidence" value="ECO:0007669"/>
    <property type="project" value="UniProtKB-UniRule"/>
</dbReference>
<dbReference type="GO" id="GO:0005975">
    <property type="term" value="P:carbohydrate metabolic process"/>
    <property type="evidence" value="ECO:0007669"/>
    <property type="project" value="InterPro"/>
</dbReference>
<dbReference type="GO" id="GO:0006098">
    <property type="term" value="P:pentose-phosphate shunt"/>
    <property type="evidence" value="ECO:0007669"/>
    <property type="project" value="UniProtKB-UniRule"/>
</dbReference>
<dbReference type="CDD" id="cd00956">
    <property type="entry name" value="Transaldolase_FSA"/>
    <property type="match status" value="1"/>
</dbReference>
<dbReference type="FunFam" id="3.20.20.70:FF:000018">
    <property type="entry name" value="Probable transaldolase"/>
    <property type="match status" value="1"/>
</dbReference>
<dbReference type="Gene3D" id="3.20.20.70">
    <property type="entry name" value="Aldolase class I"/>
    <property type="match status" value="1"/>
</dbReference>
<dbReference type="HAMAP" id="MF_00494">
    <property type="entry name" value="Transaldolase_3b"/>
    <property type="match status" value="1"/>
</dbReference>
<dbReference type="InterPro" id="IPR013785">
    <property type="entry name" value="Aldolase_TIM"/>
</dbReference>
<dbReference type="InterPro" id="IPR001585">
    <property type="entry name" value="TAL/FSA"/>
</dbReference>
<dbReference type="InterPro" id="IPR022999">
    <property type="entry name" value="Transaldolase_3B"/>
</dbReference>
<dbReference type="InterPro" id="IPR004731">
    <property type="entry name" value="Transaldolase_3B/F6P_aldolase"/>
</dbReference>
<dbReference type="InterPro" id="IPR018225">
    <property type="entry name" value="Transaldolase_AS"/>
</dbReference>
<dbReference type="InterPro" id="IPR033919">
    <property type="entry name" value="TSA/FSA_arc/bac"/>
</dbReference>
<dbReference type="NCBIfam" id="TIGR00875">
    <property type="entry name" value="fsa_talC_mipB"/>
    <property type="match status" value="1"/>
</dbReference>
<dbReference type="PANTHER" id="PTHR10683:SF40">
    <property type="entry name" value="FRUCTOSE-6-PHOSPHATE ALDOLASE 1-RELATED"/>
    <property type="match status" value="1"/>
</dbReference>
<dbReference type="PANTHER" id="PTHR10683">
    <property type="entry name" value="TRANSALDOLASE"/>
    <property type="match status" value="1"/>
</dbReference>
<dbReference type="Pfam" id="PF00923">
    <property type="entry name" value="TAL_FSA"/>
    <property type="match status" value="1"/>
</dbReference>
<dbReference type="SUPFAM" id="SSF51569">
    <property type="entry name" value="Aldolase"/>
    <property type="match status" value="1"/>
</dbReference>
<dbReference type="PROSITE" id="PS01054">
    <property type="entry name" value="TRANSALDOLASE_1"/>
    <property type="match status" value="1"/>
</dbReference>
<dbReference type="PROSITE" id="PS00958">
    <property type="entry name" value="TRANSALDOLASE_2"/>
    <property type="match status" value="1"/>
</dbReference>
<feature type="chain" id="PRO_1000198468" description="Probable transaldolase">
    <location>
        <begin position="1"/>
        <end position="217"/>
    </location>
</feature>
<feature type="active site" description="Schiff-base intermediate with substrate" evidence="1">
    <location>
        <position position="83"/>
    </location>
</feature>